<reference key="1">
    <citation type="journal article" date="2006" name="Proc. Natl. Acad. Sci. U.S.A.">
        <title>Identification of genes subject to positive selection in uropathogenic strains of Escherichia coli: a comparative genomics approach.</title>
        <authorList>
            <person name="Chen S.L."/>
            <person name="Hung C.-S."/>
            <person name="Xu J."/>
            <person name="Reigstad C.S."/>
            <person name="Magrini V."/>
            <person name="Sabo A."/>
            <person name="Blasiar D."/>
            <person name="Bieri T."/>
            <person name="Meyer R.R."/>
            <person name="Ozersky P."/>
            <person name="Armstrong J.R."/>
            <person name="Fulton R.S."/>
            <person name="Latreille J.P."/>
            <person name="Spieth J."/>
            <person name="Hooton T.M."/>
            <person name="Mardis E.R."/>
            <person name="Hultgren S.J."/>
            <person name="Gordon J.I."/>
        </authorList>
    </citation>
    <scope>NUCLEOTIDE SEQUENCE [LARGE SCALE GENOMIC DNA]</scope>
    <source>
        <strain>UTI89 / UPEC</strain>
    </source>
</reference>
<accession>Q1R4U3</accession>
<proteinExistence type="inferred from homology"/>
<comment type="function">
    <text evidence="1">Essential for recycling GMP and indirectly, cGMP.</text>
</comment>
<comment type="catalytic activity">
    <reaction evidence="1">
        <text>GMP + ATP = GDP + ADP</text>
        <dbReference type="Rhea" id="RHEA:20780"/>
        <dbReference type="ChEBI" id="CHEBI:30616"/>
        <dbReference type="ChEBI" id="CHEBI:58115"/>
        <dbReference type="ChEBI" id="CHEBI:58189"/>
        <dbReference type="ChEBI" id="CHEBI:456216"/>
        <dbReference type="EC" id="2.7.4.8"/>
    </reaction>
</comment>
<comment type="subcellular location">
    <subcellularLocation>
        <location evidence="1">Cytoplasm</location>
    </subcellularLocation>
</comment>
<comment type="similarity">
    <text evidence="1">Belongs to the guanylate kinase family.</text>
</comment>
<comment type="sequence caution" evidence="2">
    <conflict type="erroneous initiation">
        <sequence resource="EMBL-CDS" id="ABE09621"/>
    </conflict>
</comment>
<sequence length="207" mass="23593">MAQGTLYIVSAPSGAGKSSLIQALLKTQPLYDTQVSVSHTTRQPRPGEVHGEHYFFVNHDEFKEMISRDAFLEHAEVFGNYYGTSREAIEQVLATGVDVFLDIDWQGAQQIRQKMPHARSIFILPPSKIELDRRLRGRGQDSEEVIAKRMAQAVAEMSHYAEYDYLIVNDDFDTALTDLKTIIRAERLRMSRQKQRHDALISKLLAD</sequence>
<gene>
    <name evidence="1" type="primary">gmk</name>
    <name type="ordered locus">UTI89_C4193</name>
</gene>
<name>KGUA_ECOUT</name>
<dbReference type="EC" id="2.7.4.8" evidence="1"/>
<dbReference type="EMBL" id="CP000243">
    <property type="protein sequence ID" value="ABE09621.1"/>
    <property type="status" value="ALT_INIT"/>
    <property type="molecule type" value="Genomic_DNA"/>
</dbReference>
<dbReference type="RefSeq" id="WP_001295237.1">
    <property type="nucleotide sequence ID" value="NZ_CP064825.1"/>
</dbReference>
<dbReference type="SMR" id="Q1R4U3"/>
<dbReference type="GeneID" id="93778363"/>
<dbReference type="KEGG" id="eci:UTI89_C4193"/>
<dbReference type="HOGENOM" id="CLU_001715_1_2_6"/>
<dbReference type="Proteomes" id="UP000001952">
    <property type="component" value="Chromosome"/>
</dbReference>
<dbReference type="GO" id="GO:0005829">
    <property type="term" value="C:cytosol"/>
    <property type="evidence" value="ECO:0007669"/>
    <property type="project" value="TreeGrafter"/>
</dbReference>
<dbReference type="GO" id="GO:0005524">
    <property type="term" value="F:ATP binding"/>
    <property type="evidence" value="ECO:0007669"/>
    <property type="project" value="UniProtKB-UniRule"/>
</dbReference>
<dbReference type="GO" id="GO:0004385">
    <property type="term" value="F:guanylate kinase activity"/>
    <property type="evidence" value="ECO:0007669"/>
    <property type="project" value="UniProtKB-UniRule"/>
</dbReference>
<dbReference type="CDD" id="cd00071">
    <property type="entry name" value="GMPK"/>
    <property type="match status" value="1"/>
</dbReference>
<dbReference type="FunFam" id="3.40.50.300:FF:000084">
    <property type="entry name" value="Guanylate kinase"/>
    <property type="match status" value="1"/>
</dbReference>
<dbReference type="FunFam" id="3.30.63.10:FF:000002">
    <property type="entry name" value="Guanylate kinase 1"/>
    <property type="match status" value="1"/>
</dbReference>
<dbReference type="Gene3D" id="3.30.63.10">
    <property type="entry name" value="Guanylate Kinase phosphate binding domain"/>
    <property type="match status" value="1"/>
</dbReference>
<dbReference type="Gene3D" id="3.40.50.300">
    <property type="entry name" value="P-loop containing nucleotide triphosphate hydrolases"/>
    <property type="match status" value="1"/>
</dbReference>
<dbReference type="HAMAP" id="MF_00328">
    <property type="entry name" value="Guanylate_kinase"/>
    <property type="match status" value="1"/>
</dbReference>
<dbReference type="InterPro" id="IPR008145">
    <property type="entry name" value="GK/Ca_channel_bsu"/>
</dbReference>
<dbReference type="InterPro" id="IPR008144">
    <property type="entry name" value="Guanylate_kin-like_dom"/>
</dbReference>
<dbReference type="InterPro" id="IPR017665">
    <property type="entry name" value="Guanylate_kinase"/>
</dbReference>
<dbReference type="InterPro" id="IPR020590">
    <property type="entry name" value="Guanylate_kinase_CS"/>
</dbReference>
<dbReference type="InterPro" id="IPR027417">
    <property type="entry name" value="P-loop_NTPase"/>
</dbReference>
<dbReference type="NCBIfam" id="TIGR03263">
    <property type="entry name" value="guanyl_kin"/>
    <property type="match status" value="1"/>
</dbReference>
<dbReference type="PANTHER" id="PTHR23117:SF13">
    <property type="entry name" value="GUANYLATE KINASE"/>
    <property type="match status" value="1"/>
</dbReference>
<dbReference type="PANTHER" id="PTHR23117">
    <property type="entry name" value="GUANYLATE KINASE-RELATED"/>
    <property type="match status" value="1"/>
</dbReference>
<dbReference type="Pfam" id="PF00625">
    <property type="entry name" value="Guanylate_kin"/>
    <property type="match status" value="1"/>
</dbReference>
<dbReference type="SMART" id="SM00072">
    <property type="entry name" value="GuKc"/>
    <property type="match status" value="1"/>
</dbReference>
<dbReference type="SUPFAM" id="SSF52540">
    <property type="entry name" value="P-loop containing nucleoside triphosphate hydrolases"/>
    <property type="match status" value="1"/>
</dbReference>
<dbReference type="PROSITE" id="PS00856">
    <property type="entry name" value="GUANYLATE_KINASE_1"/>
    <property type="match status" value="1"/>
</dbReference>
<dbReference type="PROSITE" id="PS50052">
    <property type="entry name" value="GUANYLATE_KINASE_2"/>
    <property type="match status" value="1"/>
</dbReference>
<organism>
    <name type="scientific">Escherichia coli (strain UTI89 / UPEC)</name>
    <dbReference type="NCBI Taxonomy" id="364106"/>
    <lineage>
        <taxon>Bacteria</taxon>
        <taxon>Pseudomonadati</taxon>
        <taxon>Pseudomonadota</taxon>
        <taxon>Gammaproteobacteria</taxon>
        <taxon>Enterobacterales</taxon>
        <taxon>Enterobacteriaceae</taxon>
        <taxon>Escherichia</taxon>
    </lineage>
</organism>
<protein>
    <recommendedName>
        <fullName evidence="1">Guanylate kinase</fullName>
        <ecNumber evidence="1">2.7.4.8</ecNumber>
    </recommendedName>
    <alternativeName>
        <fullName evidence="1">GMP kinase</fullName>
    </alternativeName>
</protein>
<keyword id="KW-0067">ATP-binding</keyword>
<keyword id="KW-0963">Cytoplasm</keyword>
<keyword id="KW-0418">Kinase</keyword>
<keyword id="KW-0547">Nucleotide-binding</keyword>
<keyword id="KW-0808">Transferase</keyword>
<evidence type="ECO:0000255" key="1">
    <source>
        <dbReference type="HAMAP-Rule" id="MF_00328"/>
    </source>
</evidence>
<evidence type="ECO:0000305" key="2"/>
<feature type="chain" id="PRO_0000266323" description="Guanylate kinase">
    <location>
        <begin position="1"/>
        <end position="207"/>
    </location>
</feature>
<feature type="domain" description="Guanylate kinase-like" evidence="1">
    <location>
        <begin position="4"/>
        <end position="184"/>
    </location>
</feature>
<feature type="binding site" evidence="1">
    <location>
        <begin position="11"/>
        <end position="18"/>
    </location>
    <ligand>
        <name>ATP</name>
        <dbReference type="ChEBI" id="CHEBI:30616"/>
    </ligand>
</feature>